<name>YICR_ECOUT</name>
<accession>Q1R4V4</accession>
<reference key="1">
    <citation type="journal article" date="2006" name="Proc. Natl. Acad. Sci. U.S.A.">
        <title>Identification of genes subject to positive selection in uropathogenic strains of Escherichia coli: a comparative genomics approach.</title>
        <authorList>
            <person name="Chen S.L."/>
            <person name="Hung C.-S."/>
            <person name="Xu J."/>
            <person name="Reigstad C.S."/>
            <person name="Magrini V."/>
            <person name="Sabo A."/>
            <person name="Blasiar D."/>
            <person name="Bieri T."/>
            <person name="Meyer R.R."/>
            <person name="Ozersky P."/>
            <person name="Armstrong J.R."/>
            <person name="Fulton R.S."/>
            <person name="Latreille J.P."/>
            <person name="Spieth J."/>
            <person name="Hooton T.M."/>
            <person name="Mardis E.R."/>
            <person name="Hultgren S.J."/>
            <person name="Gordon J.I."/>
        </authorList>
    </citation>
    <scope>NUCLEOTIDE SEQUENCE [LARGE SCALE GENOMIC DNA]</scope>
    <source>
        <strain>UTI89 / UPEC</strain>
    </source>
</reference>
<gene>
    <name evidence="1" type="primary">yicR</name>
    <name type="ordered locus">UTI89_C4182</name>
</gene>
<sequence length="222" mass="25258">MKNNAQLLMPREKMLKFGISALTDVELLALFLRTGTRGKDVLTLAKEMLENFGSLYGLLTSEYEQFSGVHGIGVAKFAQLKGIAELARRYYNVRMREESPLLSPEMTREFLQSQLTGEEREIFMVIFLDSQHRVITHSRLFSGTLNHVEVHPREIIREAIKINASALILAHNHPSGCAEPSKADKLITERIIKSCQFMDLRVLDHIVIGRGEYVSFAERGWI</sequence>
<comment type="similarity">
    <text evidence="1">Belongs to the UPF0758 family. YicR subfamily.</text>
</comment>
<comment type="sequence caution" evidence="3">
    <conflict type="erroneous initiation">
        <sequence resource="EMBL-CDS" id="ABE09610"/>
    </conflict>
</comment>
<feature type="chain" id="PRO_0000322687" description="UPF0758 protein YicR">
    <location>
        <begin position="1"/>
        <end position="222"/>
    </location>
</feature>
<feature type="domain" description="MPN" evidence="2">
    <location>
        <begin position="100"/>
        <end position="222"/>
    </location>
</feature>
<feature type="short sequence motif" description="JAMM motif" evidence="2">
    <location>
        <begin position="171"/>
        <end position="184"/>
    </location>
</feature>
<feature type="binding site" evidence="2">
    <location>
        <position position="171"/>
    </location>
    <ligand>
        <name>Zn(2+)</name>
        <dbReference type="ChEBI" id="CHEBI:29105"/>
        <note>catalytic</note>
    </ligand>
</feature>
<feature type="binding site" evidence="2">
    <location>
        <position position="173"/>
    </location>
    <ligand>
        <name>Zn(2+)</name>
        <dbReference type="ChEBI" id="CHEBI:29105"/>
        <note>catalytic</note>
    </ligand>
</feature>
<feature type="binding site" evidence="2">
    <location>
        <position position="184"/>
    </location>
    <ligand>
        <name>Zn(2+)</name>
        <dbReference type="ChEBI" id="CHEBI:29105"/>
        <note>catalytic</note>
    </ligand>
</feature>
<organism>
    <name type="scientific">Escherichia coli (strain UTI89 / UPEC)</name>
    <dbReference type="NCBI Taxonomy" id="364106"/>
    <lineage>
        <taxon>Bacteria</taxon>
        <taxon>Pseudomonadati</taxon>
        <taxon>Pseudomonadota</taxon>
        <taxon>Gammaproteobacteria</taxon>
        <taxon>Enterobacterales</taxon>
        <taxon>Enterobacteriaceae</taxon>
        <taxon>Escherichia</taxon>
    </lineage>
</organism>
<proteinExistence type="inferred from homology"/>
<dbReference type="EMBL" id="CP000243">
    <property type="protein sequence ID" value="ABE09610.1"/>
    <property type="status" value="ALT_INIT"/>
    <property type="molecule type" value="Genomic_DNA"/>
</dbReference>
<dbReference type="SMR" id="Q1R4V4"/>
<dbReference type="KEGG" id="eci:UTI89_C4182"/>
<dbReference type="HOGENOM" id="CLU_073529_0_2_6"/>
<dbReference type="Proteomes" id="UP000001952">
    <property type="component" value="Chromosome"/>
</dbReference>
<dbReference type="GO" id="GO:0046872">
    <property type="term" value="F:metal ion binding"/>
    <property type="evidence" value="ECO:0007669"/>
    <property type="project" value="UniProtKB-KW"/>
</dbReference>
<dbReference type="GO" id="GO:0008237">
    <property type="term" value="F:metallopeptidase activity"/>
    <property type="evidence" value="ECO:0007669"/>
    <property type="project" value="UniProtKB-KW"/>
</dbReference>
<dbReference type="GO" id="GO:0006508">
    <property type="term" value="P:proteolysis"/>
    <property type="evidence" value="ECO:0007669"/>
    <property type="project" value="UniProtKB-KW"/>
</dbReference>
<dbReference type="CDD" id="cd08071">
    <property type="entry name" value="MPN_DUF2466"/>
    <property type="match status" value="1"/>
</dbReference>
<dbReference type="Gene3D" id="3.40.140.10">
    <property type="entry name" value="Cytidine Deaminase, domain 2"/>
    <property type="match status" value="1"/>
</dbReference>
<dbReference type="HAMAP" id="MF_00018">
    <property type="entry name" value="UPF0758_YicR"/>
    <property type="match status" value="1"/>
</dbReference>
<dbReference type="InterPro" id="IPR037518">
    <property type="entry name" value="MPN"/>
</dbReference>
<dbReference type="InterPro" id="IPR025657">
    <property type="entry name" value="RadC_JAB"/>
</dbReference>
<dbReference type="InterPro" id="IPR010994">
    <property type="entry name" value="RuvA_2-like"/>
</dbReference>
<dbReference type="InterPro" id="IPR001405">
    <property type="entry name" value="UPF0758"/>
</dbReference>
<dbReference type="InterPro" id="IPR020891">
    <property type="entry name" value="UPF0758_CS"/>
</dbReference>
<dbReference type="InterPro" id="IPR046778">
    <property type="entry name" value="UPF0758_N"/>
</dbReference>
<dbReference type="InterPro" id="IPR022820">
    <property type="entry name" value="UPF0758_YicR"/>
</dbReference>
<dbReference type="NCBIfam" id="NF000642">
    <property type="entry name" value="PRK00024.1"/>
    <property type="match status" value="1"/>
</dbReference>
<dbReference type="NCBIfam" id="TIGR00608">
    <property type="entry name" value="radc"/>
    <property type="match status" value="1"/>
</dbReference>
<dbReference type="PANTHER" id="PTHR30471">
    <property type="entry name" value="DNA REPAIR PROTEIN RADC"/>
    <property type="match status" value="1"/>
</dbReference>
<dbReference type="PANTHER" id="PTHR30471:SF3">
    <property type="entry name" value="UPF0758 PROTEIN YEES-RELATED"/>
    <property type="match status" value="1"/>
</dbReference>
<dbReference type="Pfam" id="PF04002">
    <property type="entry name" value="RadC"/>
    <property type="match status" value="1"/>
</dbReference>
<dbReference type="Pfam" id="PF20582">
    <property type="entry name" value="UPF0758_N"/>
    <property type="match status" value="1"/>
</dbReference>
<dbReference type="SUPFAM" id="SSF47781">
    <property type="entry name" value="RuvA domain 2-like"/>
    <property type="match status" value="1"/>
</dbReference>
<dbReference type="PROSITE" id="PS50249">
    <property type="entry name" value="MPN"/>
    <property type="match status" value="1"/>
</dbReference>
<dbReference type="PROSITE" id="PS01302">
    <property type="entry name" value="UPF0758"/>
    <property type="match status" value="1"/>
</dbReference>
<keyword id="KW-0378">Hydrolase</keyword>
<keyword id="KW-0479">Metal-binding</keyword>
<keyword id="KW-0482">Metalloprotease</keyword>
<keyword id="KW-0645">Protease</keyword>
<keyword id="KW-0862">Zinc</keyword>
<evidence type="ECO:0000255" key="1">
    <source>
        <dbReference type="HAMAP-Rule" id="MF_00018"/>
    </source>
</evidence>
<evidence type="ECO:0000255" key="2">
    <source>
        <dbReference type="PROSITE-ProRule" id="PRU01182"/>
    </source>
</evidence>
<evidence type="ECO:0000305" key="3"/>
<protein>
    <recommendedName>
        <fullName evidence="1">UPF0758 protein YicR</fullName>
    </recommendedName>
</protein>